<organism>
    <name type="scientific">Yersinia pestis bv. Antiqua (strain Nepal516)</name>
    <dbReference type="NCBI Taxonomy" id="377628"/>
    <lineage>
        <taxon>Bacteria</taxon>
        <taxon>Pseudomonadati</taxon>
        <taxon>Pseudomonadota</taxon>
        <taxon>Gammaproteobacteria</taxon>
        <taxon>Enterobacterales</taxon>
        <taxon>Yersiniaceae</taxon>
        <taxon>Yersinia</taxon>
    </lineage>
</organism>
<comment type="function">
    <text evidence="1">Catalyzes the reversible phosphatidyl group transfer from one phosphatidylglycerol molecule to another to form cardiolipin (CL) (diphosphatidylglycerol) and glycerol.</text>
</comment>
<comment type="catalytic activity">
    <reaction evidence="1">
        <text>2 a 1,2-diacyl-sn-glycero-3-phospho-(1'-sn-glycerol) = a cardiolipin + glycerol</text>
        <dbReference type="Rhea" id="RHEA:31451"/>
        <dbReference type="ChEBI" id="CHEBI:17754"/>
        <dbReference type="ChEBI" id="CHEBI:62237"/>
        <dbReference type="ChEBI" id="CHEBI:64716"/>
    </reaction>
</comment>
<comment type="subcellular location">
    <subcellularLocation>
        <location evidence="1">Cell inner membrane</location>
        <topology evidence="1">Multi-pass membrane protein</topology>
    </subcellularLocation>
</comment>
<comment type="similarity">
    <text evidence="1">Belongs to the phospholipase D family. Cardiolipin synthase subfamily. ClsA sub-subfamily.</text>
</comment>
<dbReference type="EC" id="2.7.8.-" evidence="1"/>
<dbReference type="EMBL" id="CP000305">
    <property type="protein sequence ID" value="ABG17984.1"/>
    <property type="molecule type" value="Genomic_DNA"/>
</dbReference>
<dbReference type="EMBL" id="ACNQ01000009">
    <property type="protein sequence ID" value="EEO77105.1"/>
    <property type="molecule type" value="Genomic_DNA"/>
</dbReference>
<dbReference type="RefSeq" id="WP_002210648.1">
    <property type="nucleotide sequence ID" value="NZ_ACNQ01000009.1"/>
</dbReference>
<dbReference type="SMR" id="Q1CJ46"/>
<dbReference type="GeneID" id="57976479"/>
<dbReference type="KEGG" id="ypn:YPN_1655"/>
<dbReference type="HOGENOM" id="CLU_038053_1_0_6"/>
<dbReference type="Proteomes" id="UP000008936">
    <property type="component" value="Chromosome"/>
</dbReference>
<dbReference type="GO" id="GO:0005886">
    <property type="term" value="C:plasma membrane"/>
    <property type="evidence" value="ECO:0007669"/>
    <property type="project" value="UniProtKB-SubCell"/>
</dbReference>
<dbReference type="GO" id="GO:0008808">
    <property type="term" value="F:cardiolipin synthase activity"/>
    <property type="evidence" value="ECO:0007669"/>
    <property type="project" value="InterPro"/>
</dbReference>
<dbReference type="GO" id="GO:0032049">
    <property type="term" value="P:cardiolipin biosynthetic process"/>
    <property type="evidence" value="ECO:0007669"/>
    <property type="project" value="InterPro"/>
</dbReference>
<dbReference type="CDD" id="cd09152">
    <property type="entry name" value="PLDc_EcCLS_like_1"/>
    <property type="match status" value="1"/>
</dbReference>
<dbReference type="CDD" id="cd09158">
    <property type="entry name" value="PLDc_EcCLS_like_2"/>
    <property type="match status" value="1"/>
</dbReference>
<dbReference type="FunFam" id="3.30.870.10:FF:000002">
    <property type="entry name" value="Cardiolipin synthase A"/>
    <property type="match status" value="1"/>
</dbReference>
<dbReference type="FunFam" id="3.30.870.10:FF:000003">
    <property type="entry name" value="Cardiolipin synthase A"/>
    <property type="match status" value="1"/>
</dbReference>
<dbReference type="Gene3D" id="3.30.870.10">
    <property type="entry name" value="Endonuclease Chain A"/>
    <property type="match status" value="2"/>
</dbReference>
<dbReference type="HAMAP" id="MF_00190">
    <property type="entry name" value="Cardiolipin_synth_ClsA"/>
    <property type="match status" value="1"/>
</dbReference>
<dbReference type="InterPro" id="IPR022924">
    <property type="entry name" value="Cardiolipin_synthase"/>
</dbReference>
<dbReference type="InterPro" id="IPR030840">
    <property type="entry name" value="CL_synthase_A"/>
</dbReference>
<dbReference type="InterPro" id="IPR027379">
    <property type="entry name" value="CLS_N"/>
</dbReference>
<dbReference type="InterPro" id="IPR025202">
    <property type="entry name" value="PLD-like_dom"/>
</dbReference>
<dbReference type="InterPro" id="IPR001736">
    <property type="entry name" value="PLipase_D/transphosphatidylase"/>
</dbReference>
<dbReference type="NCBIfam" id="TIGR04265">
    <property type="entry name" value="bac_cardiolipin"/>
    <property type="match status" value="1"/>
</dbReference>
<dbReference type="PANTHER" id="PTHR21248">
    <property type="entry name" value="CARDIOLIPIN SYNTHASE"/>
    <property type="match status" value="1"/>
</dbReference>
<dbReference type="PANTHER" id="PTHR21248:SF22">
    <property type="entry name" value="PHOSPHOLIPASE D"/>
    <property type="match status" value="1"/>
</dbReference>
<dbReference type="Pfam" id="PF13091">
    <property type="entry name" value="PLDc_2"/>
    <property type="match status" value="2"/>
</dbReference>
<dbReference type="Pfam" id="PF13396">
    <property type="entry name" value="PLDc_N"/>
    <property type="match status" value="1"/>
</dbReference>
<dbReference type="SMART" id="SM00155">
    <property type="entry name" value="PLDc"/>
    <property type="match status" value="2"/>
</dbReference>
<dbReference type="SUPFAM" id="SSF56024">
    <property type="entry name" value="Phospholipase D/nuclease"/>
    <property type="match status" value="2"/>
</dbReference>
<dbReference type="PROSITE" id="PS50035">
    <property type="entry name" value="PLD"/>
    <property type="match status" value="2"/>
</dbReference>
<reference key="1">
    <citation type="journal article" date="2006" name="J. Bacteriol.">
        <title>Complete genome sequence of Yersinia pestis strains Antiqua and Nepal516: evidence of gene reduction in an emerging pathogen.</title>
        <authorList>
            <person name="Chain P.S.G."/>
            <person name="Hu P."/>
            <person name="Malfatti S.A."/>
            <person name="Radnedge L."/>
            <person name="Larimer F."/>
            <person name="Vergez L.M."/>
            <person name="Worsham P."/>
            <person name="Chu M.C."/>
            <person name="Andersen G.L."/>
        </authorList>
    </citation>
    <scope>NUCLEOTIDE SEQUENCE [LARGE SCALE GENOMIC DNA]</scope>
    <source>
        <strain>Nepal516</strain>
    </source>
</reference>
<reference key="2">
    <citation type="submission" date="2009-04" db="EMBL/GenBank/DDBJ databases">
        <title>Yersinia pestis Nepal516A whole genome shotgun sequencing project.</title>
        <authorList>
            <person name="Plunkett G. III"/>
            <person name="Anderson B.D."/>
            <person name="Baumler D.J."/>
            <person name="Burland V."/>
            <person name="Cabot E.L."/>
            <person name="Glasner J.D."/>
            <person name="Mau B."/>
            <person name="Neeno-Eckwall E."/>
            <person name="Perna N.T."/>
            <person name="Munk A.C."/>
            <person name="Tapia R."/>
            <person name="Green L.D."/>
            <person name="Rogers Y.C."/>
            <person name="Detter J.C."/>
            <person name="Bruce D.C."/>
            <person name="Brettin T.S."/>
        </authorList>
    </citation>
    <scope>NUCLEOTIDE SEQUENCE [LARGE SCALE GENOMIC DNA]</scope>
    <source>
        <strain>Nepal516</strain>
    </source>
</reference>
<name>CLSA_YERPN</name>
<proteinExistence type="inferred from homology"/>
<accession>Q1CJ46</accession>
<accession>C4GSU5</accession>
<gene>
    <name evidence="1" type="primary">clsA</name>
    <name type="synonym">cls</name>
    <name type="ordered locus">YPN_1655</name>
    <name type="ORF">YP516_1840</name>
</gene>
<feature type="chain" id="PRO_1000058498" description="Cardiolipin synthase A">
    <location>
        <begin position="1"/>
        <end position="486"/>
    </location>
</feature>
<feature type="transmembrane region" description="Helical" evidence="1">
    <location>
        <begin position="3"/>
        <end position="23"/>
    </location>
</feature>
<feature type="transmembrane region" description="Helical" evidence="1">
    <location>
        <begin position="38"/>
        <end position="58"/>
    </location>
</feature>
<feature type="domain" description="PLD phosphodiesterase 1" evidence="1">
    <location>
        <begin position="219"/>
        <end position="246"/>
    </location>
</feature>
<feature type="domain" description="PLD phosphodiesterase 2" evidence="1">
    <location>
        <begin position="399"/>
        <end position="426"/>
    </location>
</feature>
<feature type="active site" evidence="1">
    <location>
        <position position="224"/>
    </location>
</feature>
<feature type="active site" evidence="1">
    <location>
        <position position="226"/>
    </location>
</feature>
<feature type="active site" evidence="1">
    <location>
        <position position="231"/>
    </location>
</feature>
<feature type="active site" evidence="1">
    <location>
        <position position="404"/>
    </location>
</feature>
<feature type="active site" evidence="1">
    <location>
        <position position="406"/>
    </location>
</feature>
<feature type="active site" evidence="1">
    <location>
        <position position="411"/>
    </location>
</feature>
<protein>
    <recommendedName>
        <fullName evidence="1">Cardiolipin synthase A</fullName>
        <shortName evidence="1">CL synthase</shortName>
        <ecNumber evidence="1">2.7.8.-</ecNumber>
    </recommendedName>
</protein>
<keyword id="KW-0997">Cell inner membrane</keyword>
<keyword id="KW-1003">Cell membrane</keyword>
<keyword id="KW-0444">Lipid biosynthesis</keyword>
<keyword id="KW-0443">Lipid metabolism</keyword>
<keyword id="KW-0472">Membrane</keyword>
<keyword id="KW-0594">Phospholipid biosynthesis</keyword>
<keyword id="KW-1208">Phospholipid metabolism</keyword>
<keyword id="KW-0677">Repeat</keyword>
<keyword id="KW-0808">Transferase</keyword>
<keyword id="KW-0812">Transmembrane</keyword>
<keyword id="KW-1133">Transmembrane helix</keyword>
<evidence type="ECO:0000255" key="1">
    <source>
        <dbReference type="HAMAP-Rule" id="MF_00190"/>
    </source>
</evidence>
<sequence length="486" mass="55127">MTTFYTVISWLSVFGYWLLIAGVTLRILMKRRAVPSAMAWLLIIYILPLVGIIAYLSFGELHLGKRRAERAKAMWPSTARWLSELKECQHIFANSNSEVASPLFQLCERRQGINGVKGNQLQLLTTTDDTLKALVRDIELARHNIEMVFYIWQPGGLVDQVAESLMAAARRGVHCRLLLDSAGSKQFFRSPYPAMMRNAGIEVVEALKVNVFRMFLRRMDLRQHRKIVLIDNYVAYTGSMNMVDPRFFKQDAGVGQWIDMMARMEGPVATTLGIVYACDWEIETGKRILPPPPDANIMPFEEETGHTIQVIASGPGFPEEMIHQALLTAVYAAREQLIMTTPYFVPSDDLLHAICTAAQRGVDVSIIVPRENDSMMVRWASRAFFTELLNAGVKIYQFEGGLLHSKSVLVDGQLSLVGTVNLDMRSLWLNFEITLVIDDDGFGADLAQVQDDYIARSALLDGERWNKRPLWHRVTERLFYFFSPLL</sequence>